<evidence type="ECO:0000255" key="1">
    <source>
        <dbReference type="HAMAP-Rule" id="MF_00031"/>
    </source>
</evidence>
<comment type="function">
    <text evidence="1">The RuvA-RuvB-RuvC complex processes Holliday junction (HJ) DNA during genetic recombination and DNA repair, while the RuvA-RuvB complex plays an important role in the rescue of blocked DNA replication forks via replication fork reversal (RFR). RuvA specifically binds to HJ cruciform DNA, conferring on it an open structure. The RuvB hexamer acts as an ATP-dependent pump, pulling dsDNA into and through the RuvAB complex. HJ branch migration allows RuvC to scan DNA until it finds its consensus sequence, where it cleaves and resolves the cruciform DNA.</text>
</comment>
<comment type="subunit">
    <text evidence="1">Homotetramer. Forms an RuvA(8)-RuvB(12)-Holliday junction (HJ) complex. HJ DNA is sandwiched between 2 RuvA tetramers; dsDNA enters through RuvA and exits via RuvB. An RuvB hexamer assembles on each DNA strand where it exits the tetramer. Each RuvB hexamer is contacted by two RuvA subunits (via domain III) on 2 adjacent RuvB subunits; this complex drives branch migration. In the full resolvosome a probable DNA-RuvA(4)-RuvB(12)-RuvC(2) complex forms which resolves the HJ.</text>
</comment>
<comment type="subcellular location">
    <subcellularLocation>
        <location evidence="1">Cytoplasm</location>
    </subcellularLocation>
</comment>
<comment type="domain">
    <text evidence="1">Has three domains with a flexible linker between the domains II and III and assumes an 'L' shape. Domain III is highly mobile and contacts RuvB.</text>
</comment>
<comment type="similarity">
    <text evidence="1">Belongs to the RuvA family.</text>
</comment>
<accession>Q17WH6</accession>
<sequence length="183" mass="20278">MTVGLIGVVEKISALEVHIEVQGVVYGVQVSMRTASMLQTGQKARLKILQVIKEDAHLLYGFLEESEKILFERLLKINGVGGRIALAILSSFSPNEFENIIATKEVKRLQQVPGIGKKLADKIMVDLIGFFIQDETKPVHNEAFLALESLGFKSAEINPILKKLKPNLSVEEAIKEALQQLRS</sequence>
<name>RUVA_HELAH</name>
<dbReference type="EMBL" id="AM260522">
    <property type="protein sequence ID" value="CAK00000.1"/>
    <property type="molecule type" value="Genomic_DNA"/>
</dbReference>
<dbReference type="RefSeq" id="WP_011578106.1">
    <property type="nucleotide sequence ID" value="NC_008229.1"/>
</dbReference>
<dbReference type="SMR" id="Q17WH6"/>
<dbReference type="STRING" id="382638.Hac_1248"/>
<dbReference type="GeneID" id="31758589"/>
<dbReference type="KEGG" id="hac:Hac_1248"/>
<dbReference type="eggNOG" id="COG0632">
    <property type="taxonomic scope" value="Bacteria"/>
</dbReference>
<dbReference type="HOGENOM" id="CLU_087936_3_1_7"/>
<dbReference type="OrthoDB" id="5293449at2"/>
<dbReference type="BioCyc" id="HACI382638:HAC_RS05385-MONOMER"/>
<dbReference type="Proteomes" id="UP000000775">
    <property type="component" value="Chromosome"/>
</dbReference>
<dbReference type="GO" id="GO:0005737">
    <property type="term" value="C:cytoplasm"/>
    <property type="evidence" value="ECO:0007669"/>
    <property type="project" value="UniProtKB-SubCell"/>
</dbReference>
<dbReference type="GO" id="GO:0009379">
    <property type="term" value="C:Holliday junction helicase complex"/>
    <property type="evidence" value="ECO:0007669"/>
    <property type="project" value="InterPro"/>
</dbReference>
<dbReference type="GO" id="GO:0048476">
    <property type="term" value="C:Holliday junction resolvase complex"/>
    <property type="evidence" value="ECO:0007669"/>
    <property type="project" value="UniProtKB-UniRule"/>
</dbReference>
<dbReference type="GO" id="GO:0005524">
    <property type="term" value="F:ATP binding"/>
    <property type="evidence" value="ECO:0007669"/>
    <property type="project" value="InterPro"/>
</dbReference>
<dbReference type="GO" id="GO:0000400">
    <property type="term" value="F:four-way junction DNA binding"/>
    <property type="evidence" value="ECO:0007669"/>
    <property type="project" value="UniProtKB-UniRule"/>
</dbReference>
<dbReference type="GO" id="GO:0009378">
    <property type="term" value="F:four-way junction helicase activity"/>
    <property type="evidence" value="ECO:0007669"/>
    <property type="project" value="InterPro"/>
</dbReference>
<dbReference type="GO" id="GO:0006310">
    <property type="term" value="P:DNA recombination"/>
    <property type="evidence" value="ECO:0007669"/>
    <property type="project" value="UniProtKB-UniRule"/>
</dbReference>
<dbReference type="GO" id="GO:0006281">
    <property type="term" value="P:DNA repair"/>
    <property type="evidence" value="ECO:0007669"/>
    <property type="project" value="UniProtKB-UniRule"/>
</dbReference>
<dbReference type="CDD" id="cd14332">
    <property type="entry name" value="UBA_RuvA_C"/>
    <property type="match status" value="1"/>
</dbReference>
<dbReference type="Gene3D" id="1.10.150.20">
    <property type="entry name" value="5' to 3' exonuclease, C-terminal subdomain"/>
    <property type="match status" value="1"/>
</dbReference>
<dbReference type="Gene3D" id="1.10.8.10">
    <property type="entry name" value="DNA helicase RuvA subunit, C-terminal domain"/>
    <property type="match status" value="1"/>
</dbReference>
<dbReference type="Gene3D" id="2.40.50.140">
    <property type="entry name" value="Nucleic acid-binding proteins"/>
    <property type="match status" value="1"/>
</dbReference>
<dbReference type="HAMAP" id="MF_00031">
    <property type="entry name" value="DNA_HJ_migration_RuvA"/>
    <property type="match status" value="1"/>
</dbReference>
<dbReference type="InterPro" id="IPR013849">
    <property type="entry name" value="DNA_helicase_Holl-junc_RuvA_I"/>
</dbReference>
<dbReference type="InterPro" id="IPR003583">
    <property type="entry name" value="Hlx-hairpin-Hlx_DNA-bd_motif"/>
</dbReference>
<dbReference type="InterPro" id="IPR012340">
    <property type="entry name" value="NA-bd_OB-fold"/>
</dbReference>
<dbReference type="InterPro" id="IPR000085">
    <property type="entry name" value="RuvA"/>
</dbReference>
<dbReference type="InterPro" id="IPR010994">
    <property type="entry name" value="RuvA_2-like"/>
</dbReference>
<dbReference type="InterPro" id="IPR011114">
    <property type="entry name" value="RuvA_C"/>
</dbReference>
<dbReference type="InterPro" id="IPR036267">
    <property type="entry name" value="RuvA_C_sf"/>
</dbReference>
<dbReference type="NCBIfam" id="TIGR00084">
    <property type="entry name" value="ruvA"/>
    <property type="match status" value="1"/>
</dbReference>
<dbReference type="Pfam" id="PF14520">
    <property type="entry name" value="HHH_5"/>
    <property type="match status" value="1"/>
</dbReference>
<dbReference type="Pfam" id="PF07499">
    <property type="entry name" value="RuvA_C"/>
    <property type="match status" value="1"/>
</dbReference>
<dbReference type="Pfam" id="PF01330">
    <property type="entry name" value="RuvA_N"/>
    <property type="match status" value="1"/>
</dbReference>
<dbReference type="SMART" id="SM00278">
    <property type="entry name" value="HhH1"/>
    <property type="match status" value="2"/>
</dbReference>
<dbReference type="SUPFAM" id="SSF46929">
    <property type="entry name" value="DNA helicase RuvA subunit, C-terminal domain"/>
    <property type="match status" value="1"/>
</dbReference>
<dbReference type="SUPFAM" id="SSF50249">
    <property type="entry name" value="Nucleic acid-binding proteins"/>
    <property type="match status" value="1"/>
</dbReference>
<dbReference type="SUPFAM" id="SSF47781">
    <property type="entry name" value="RuvA domain 2-like"/>
    <property type="match status" value="1"/>
</dbReference>
<gene>
    <name evidence="1" type="primary">ruvA</name>
    <name type="ordered locus">Hac_1248</name>
</gene>
<keyword id="KW-0963">Cytoplasm</keyword>
<keyword id="KW-0227">DNA damage</keyword>
<keyword id="KW-0233">DNA recombination</keyword>
<keyword id="KW-0234">DNA repair</keyword>
<keyword id="KW-0238">DNA-binding</keyword>
<feature type="chain" id="PRO_1000002462" description="Holliday junction branch migration complex subunit RuvA">
    <location>
        <begin position="1"/>
        <end position="183"/>
    </location>
</feature>
<feature type="region of interest" description="Domain I" evidence="1">
    <location>
        <begin position="1"/>
        <end position="63"/>
    </location>
</feature>
<feature type="region of interest" description="Domain II" evidence="1">
    <location>
        <begin position="64"/>
        <end position="141"/>
    </location>
</feature>
<feature type="region of interest" description="Domain III" evidence="1">
    <location>
        <begin position="141"/>
        <end position="183"/>
    </location>
</feature>
<feature type="region of interest" description="Flexible linker" evidence="1">
    <location>
        <position position="141"/>
    </location>
</feature>
<reference key="1">
    <citation type="journal article" date="2006" name="PLoS Genet.">
        <title>Who ate whom? Adaptive Helicobacter genomic changes that accompanied a host jump from early humans to large felines.</title>
        <authorList>
            <person name="Eppinger M."/>
            <person name="Baar C."/>
            <person name="Linz B."/>
            <person name="Raddatz G."/>
            <person name="Lanz C."/>
            <person name="Keller H."/>
            <person name="Morelli G."/>
            <person name="Gressmann H."/>
            <person name="Achtman M."/>
            <person name="Schuster S.C."/>
        </authorList>
    </citation>
    <scope>NUCLEOTIDE SEQUENCE [LARGE SCALE GENOMIC DNA]</scope>
    <source>
        <strain>Sheeba</strain>
    </source>
</reference>
<organism>
    <name type="scientific">Helicobacter acinonychis (strain Sheeba)</name>
    <dbReference type="NCBI Taxonomy" id="382638"/>
    <lineage>
        <taxon>Bacteria</taxon>
        <taxon>Pseudomonadati</taxon>
        <taxon>Campylobacterota</taxon>
        <taxon>Epsilonproteobacteria</taxon>
        <taxon>Campylobacterales</taxon>
        <taxon>Helicobacteraceae</taxon>
        <taxon>Helicobacter</taxon>
    </lineage>
</organism>
<proteinExistence type="inferred from homology"/>
<protein>
    <recommendedName>
        <fullName evidence="1">Holliday junction branch migration complex subunit RuvA</fullName>
    </recommendedName>
</protein>